<feature type="chain" id="PRO_1000118504" description="Phosphomethylpyrimidine synthase">
    <location>
        <begin position="1"/>
        <end position="437"/>
    </location>
</feature>
<feature type="binding site" evidence="1">
    <location>
        <position position="69"/>
    </location>
    <ligand>
        <name>substrate</name>
    </ligand>
</feature>
<feature type="binding site" evidence="1">
    <location>
        <position position="98"/>
    </location>
    <ligand>
        <name>substrate</name>
    </ligand>
</feature>
<feature type="binding site" evidence="1">
    <location>
        <position position="127"/>
    </location>
    <ligand>
        <name>substrate</name>
    </ligand>
</feature>
<feature type="binding site" evidence="1">
    <location>
        <position position="163"/>
    </location>
    <ligand>
        <name>substrate</name>
    </ligand>
</feature>
<feature type="binding site" evidence="1">
    <location>
        <begin position="185"/>
        <end position="187"/>
    </location>
    <ligand>
        <name>substrate</name>
    </ligand>
</feature>
<feature type="binding site" evidence="1">
    <location>
        <begin position="226"/>
        <end position="229"/>
    </location>
    <ligand>
        <name>substrate</name>
    </ligand>
</feature>
<feature type="binding site" evidence="1">
    <location>
        <position position="265"/>
    </location>
    <ligand>
        <name>substrate</name>
    </ligand>
</feature>
<feature type="binding site" evidence="1">
    <location>
        <position position="269"/>
    </location>
    <ligand>
        <name>Zn(2+)</name>
        <dbReference type="ChEBI" id="CHEBI:29105"/>
    </ligand>
</feature>
<feature type="binding site" evidence="1">
    <location>
        <position position="292"/>
    </location>
    <ligand>
        <name>substrate</name>
    </ligand>
</feature>
<feature type="binding site" evidence="1">
    <location>
        <position position="333"/>
    </location>
    <ligand>
        <name>Zn(2+)</name>
        <dbReference type="ChEBI" id="CHEBI:29105"/>
    </ligand>
</feature>
<feature type="binding site" evidence="1">
    <location>
        <position position="409"/>
    </location>
    <ligand>
        <name>[4Fe-4S] cluster</name>
        <dbReference type="ChEBI" id="CHEBI:49883"/>
        <note>4Fe-4S-S-AdoMet</note>
    </ligand>
</feature>
<feature type="binding site" evidence="1">
    <location>
        <position position="412"/>
    </location>
    <ligand>
        <name>[4Fe-4S] cluster</name>
        <dbReference type="ChEBI" id="CHEBI:49883"/>
        <note>4Fe-4S-S-AdoMet</note>
    </ligand>
</feature>
<feature type="binding site" evidence="1">
    <location>
        <position position="416"/>
    </location>
    <ligand>
        <name>[4Fe-4S] cluster</name>
        <dbReference type="ChEBI" id="CHEBI:49883"/>
        <note>4Fe-4S-S-AdoMet</note>
    </ligand>
</feature>
<protein>
    <recommendedName>
        <fullName evidence="1">Phosphomethylpyrimidine synthase</fullName>
        <ecNumber evidence="1">4.1.99.17</ecNumber>
    </recommendedName>
    <alternativeName>
        <fullName evidence="1">Hydroxymethylpyrimidine phosphate synthase</fullName>
        <shortName evidence="1">HMP-P synthase</shortName>
        <shortName evidence="1">HMP-phosphate synthase</shortName>
        <shortName evidence="1">HMPP synthase</shortName>
    </alternativeName>
    <alternativeName>
        <fullName evidence="1">Thiamine biosynthesis protein ThiC</fullName>
    </alternativeName>
</protein>
<gene>
    <name evidence="1" type="primary">thiC</name>
    <name type="ordered locus">CLM_3307</name>
</gene>
<evidence type="ECO:0000255" key="1">
    <source>
        <dbReference type="HAMAP-Rule" id="MF_00089"/>
    </source>
</evidence>
<comment type="function">
    <text evidence="1">Catalyzes the synthesis of the hydroxymethylpyrimidine phosphate (HMP-P) moiety of thiamine from aminoimidazole ribotide (AIR) in a radical S-adenosyl-L-methionine (SAM)-dependent reaction.</text>
</comment>
<comment type="catalytic activity">
    <reaction evidence="1">
        <text>5-amino-1-(5-phospho-beta-D-ribosyl)imidazole + S-adenosyl-L-methionine = 4-amino-2-methyl-5-(phosphooxymethyl)pyrimidine + CO + 5'-deoxyadenosine + formate + L-methionine + 3 H(+)</text>
        <dbReference type="Rhea" id="RHEA:24840"/>
        <dbReference type="ChEBI" id="CHEBI:15378"/>
        <dbReference type="ChEBI" id="CHEBI:15740"/>
        <dbReference type="ChEBI" id="CHEBI:17245"/>
        <dbReference type="ChEBI" id="CHEBI:17319"/>
        <dbReference type="ChEBI" id="CHEBI:57844"/>
        <dbReference type="ChEBI" id="CHEBI:58354"/>
        <dbReference type="ChEBI" id="CHEBI:59789"/>
        <dbReference type="ChEBI" id="CHEBI:137981"/>
        <dbReference type="EC" id="4.1.99.17"/>
    </reaction>
</comment>
<comment type="cofactor">
    <cofactor evidence="1">
        <name>[4Fe-4S] cluster</name>
        <dbReference type="ChEBI" id="CHEBI:49883"/>
    </cofactor>
    <text evidence="1">Binds 1 [4Fe-4S] cluster per subunit. The cluster is coordinated with 3 cysteines and an exchangeable S-adenosyl-L-methionine.</text>
</comment>
<comment type="pathway">
    <text evidence="1">Cofactor biosynthesis; thiamine diphosphate biosynthesis.</text>
</comment>
<comment type="similarity">
    <text evidence="1">Belongs to the ThiC family.</text>
</comment>
<sequence>MNYTTQMDAAKKGIVTKEMEIVAKKENMNVKDLMELVSKGKVAIPANKNHKSLDPEGIGQGLRTKINVNLGISKDCYNIDMELEKVQKAIDMKAEAIMDLSCFGKTEEFRKRLIDMSPAIIGTVPIYDAVGFYDKELKDITSEEFLKVAEKHAENGADFLTIHVGMNRKTAATFKKNPRTMNIVSRGGSLLYAWMELNNKENPFYEGFDKLLDICEKYDVTLSLGDACRPGCIEDSTDASQIEELIALGELTKRAWERNVQVIIEGPGHMTLDEIEINMKIEKKLCHGAPFYVLGPIVTDIAPGYDHITSAIGGAIAATHGADFLCYVTPAEHLRLPNLDDMKEGIIASKIAAHAADLAKGVKGARDWDNAMAKARRDLDWERMFELSIDEEKARRYREESKAKSKDSCTMCGKMCAVRNMNRVTEGKDLNMLRDDD</sequence>
<keyword id="KW-0004">4Fe-4S</keyword>
<keyword id="KW-0408">Iron</keyword>
<keyword id="KW-0411">Iron-sulfur</keyword>
<keyword id="KW-0456">Lyase</keyword>
<keyword id="KW-0479">Metal-binding</keyword>
<keyword id="KW-0949">S-adenosyl-L-methionine</keyword>
<keyword id="KW-0784">Thiamine biosynthesis</keyword>
<keyword id="KW-0862">Zinc</keyword>
<dbReference type="EC" id="4.1.99.17" evidence="1"/>
<dbReference type="EMBL" id="CP001581">
    <property type="protein sequence ID" value="ACO85107.1"/>
    <property type="molecule type" value="Genomic_DNA"/>
</dbReference>
<dbReference type="RefSeq" id="WP_012704583.1">
    <property type="nucleotide sequence ID" value="NC_012563.1"/>
</dbReference>
<dbReference type="SMR" id="C1FVP6"/>
<dbReference type="KEGG" id="cby:CLM_3307"/>
<dbReference type="eggNOG" id="COG0422">
    <property type="taxonomic scope" value="Bacteria"/>
</dbReference>
<dbReference type="HOGENOM" id="CLU_013181_2_1_9"/>
<dbReference type="UniPathway" id="UPA00060"/>
<dbReference type="Proteomes" id="UP000001374">
    <property type="component" value="Chromosome"/>
</dbReference>
<dbReference type="GO" id="GO:0005829">
    <property type="term" value="C:cytosol"/>
    <property type="evidence" value="ECO:0007669"/>
    <property type="project" value="TreeGrafter"/>
</dbReference>
<dbReference type="GO" id="GO:0051539">
    <property type="term" value="F:4 iron, 4 sulfur cluster binding"/>
    <property type="evidence" value="ECO:0007669"/>
    <property type="project" value="UniProtKB-KW"/>
</dbReference>
<dbReference type="GO" id="GO:0016830">
    <property type="term" value="F:carbon-carbon lyase activity"/>
    <property type="evidence" value="ECO:0007669"/>
    <property type="project" value="InterPro"/>
</dbReference>
<dbReference type="GO" id="GO:0008270">
    <property type="term" value="F:zinc ion binding"/>
    <property type="evidence" value="ECO:0007669"/>
    <property type="project" value="UniProtKB-UniRule"/>
</dbReference>
<dbReference type="GO" id="GO:0009228">
    <property type="term" value="P:thiamine biosynthetic process"/>
    <property type="evidence" value="ECO:0007669"/>
    <property type="project" value="UniProtKB-KW"/>
</dbReference>
<dbReference type="GO" id="GO:0009229">
    <property type="term" value="P:thiamine diphosphate biosynthetic process"/>
    <property type="evidence" value="ECO:0007669"/>
    <property type="project" value="UniProtKB-UniRule"/>
</dbReference>
<dbReference type="FunFam" id="3.20.20.540:FF:000001">
    <property type="entry name" value="Phosphomethylpyrimidine synthase"/>
    <property type="match status" value="1"/>
</dbReference>
<dbReference type="Gene3D" id="6.10.250.620">
    <property type="match status" value="1"/>
</dbReference>
<dbReference type="Gene3D" id="3.20.20.540">
    <property type="entry name" value="Radical SAM ThiC family, central domain"/>
    <property type="match status" value="1"/>
</dbReference>
<dbReference type="HAMAP" id="MF_00089">
    <property type="entry name" value="ThiC"/>
    <property type="match status" value="1"/>
</dbReference>
<dbReference type="InterPro" id="IPR037509">
    <property type="entry name" value="ThiC"/>
</dbReference>
<dbReference type="InterPro" id="IPR038521">
    <property type="entry name" value="ThiC/Bza_core_dom"/>
</dbReference>
<dbReference type="InterPro" id="IPR002817">
    <property type="entry name" value="ThiC/BzaA/B"/>
</dbReference>
<dbReference type="NCBIfam" id="NF009895">
    <property type="entry name" value="PRK13352.1"/>
    <property type="match status" value="1"/>
</dbReference>
<dbReference type="NCBIfam" id="TIGR00190">
    <property type="entry name" value="thiC"/>
    <property type="match status" value="1"/>
</dbReference>
<dbReference type="PANTHER" id="PTHR30557:SF1">
    <property type="entry name" value="PHOSPHOMETHYLPYRIMIDINE SYNTHASE, CHLOROPLASTIC"/>
    <property type="match status" value="1"/>
</dbReference>
<dbReference type="PANTHER" id="PTHR30557">
    <property type="entry name" value="THIAMINE BIOSYNTHESIS PROTEIN THIC"/>
    <property type="match status" value="1"/>
</dbReference>
<dbReference type="Pfam" id="PF01964">
    <property type="entry name" value="ThiC_Rad_SAM"/>
    <property type="match status" value="1"/>
</dbReference>
<dbReference type="SFLD" id="SFLDF00407">
    <property type="entry name" value="phosphomethylpyrimidine_syntha"/>
    <property type="match status" value="1"/>
</dbReference>
<dbReference type="SFLD" id="SFLDG01114">
    <property type="entry name" value="phosphomethylpyrimidine_syntha"/>
    <property type="match status" value="1"/>
</dbReference>
<dbReference type="SFLD" id="SFLDS00113">
    <property type="entry name" value="Radical_SAM_Phosphomethylpyrim"/>
    <property type="match status" value="1"/>
</dbReference>
<name>THIC_CLOBJ</name>
<accession>C1FVP6</accession>
<proteinExistence type="inferred from homology"/>
<reference key="1">
    <citation type="submission" date="2008-10" db="EMBL/GenBank/DDBJ databases">
        <title>Genome sequence of Clostridium botulinum A2 Kyoto.</title>
        <authorList>
            <person name="Shrivastava S."/>
            <person name="Brinkac L.M."/>
            <person name="Brown J.L."/>
            <person name="Bruce D."/>
            <person name="Detter C.C."/>
            <person name="Johnson E.A."/>
            <person name="Munk C.A."/>
            <person name="Smith L.A."/>
            <person name="Smith T.J."/>
            <person name="Sutton G."/>
            <person name="Brettin T.S."/>
        </authorList>
    </citation>
    <scope>NUCLEOTIDE SEQUENCE [LARGE SCALE GENOMIC DNA]</scope>
    <source>
        <strain>Kyoto / Type A2</strain>
    </source>
</reference>
<organism>
    <name type="scientific">Clostridium botulinum (strain Kyoto / Type A2)</name>
    <dbReference type="NCBI Taxonomy" id="536232"/>
    <lineage>
        <taxon>Bacteria</taxon>
        <taxon>Bacillati</taxon>
        <taxon>Bacillota</taxon>
        <taxon>Clostridia</taxon>
        <taxon>Eubacteriales</taxon>
        <taxon>Clostridiaceae</taxon>
        <taxon>Clostridium</taxon>
    </lineage>
</organism>